<feature type="chain" id="PRO_0000253215" description="Uncharacterized WD repeat-containing protein L84">
    <location>
        <begin position="1"/>
        <end position="132"/>
    </location>
</feature>
<feature type="repeat" description="WD 1">
    <location>
        <begin position="14"/>
        <end position="53"/>
    </location>
</feature>
<feature type="repeat" description="WD 2">
    <location>
        <begin position="58"/>
        <end position="97"/>
    </location>
</feature>
<name>YL084_MIMIV</name>
<reference key="1">
    <citation type="journal article" date="2004" name="Science">
        <title>The 1.2-megabase genome sequence of Mimivirus.</title>
        <authorList>
            <person name="Raoult D."/>
            <person name="Audic S."/>
            <person name="Robert C."/>
            <person name="Abergel C."/>
            <person name="Renesto P."/>
            <person name="Ogata H."/>
            <person name="La Scola B."/>
            <person name="Susan M."/>
            <person name="Claverie J.-M."/>
        </authorList>
    </citation>
    <scope>NUCLEOTIDE SEQUENCE [LARGE SCALE GENOMIC DNA]</scope>
    <source>
        <strain>Rowbotham-Bradford</strain>
    </source>
</reference>
<accession>Q5UPG2</accession>
<proteinExistence type="predicted"/>
<organismHost>
    <name type="scientific">Acanthamoeba polyphaga</name>
    <name type="common">Amoeba</name>
    <dbReference type="NCBI Taxonomy" id="5757"/>
</organismHost>
<protein>
    <recommendedName>
        <fullName>Uncharacterized WD repeat-containing protein L84</fullName>
    </recommendedName>
</protein>
<sequence length="132" mass="15170">MLTDRKFVVKTTLDLQDDISSVCCSPCNRYIIIASGNNCQHIYYLCATNLEILFKFKAHDDSIVHLVSTLDGKYIVSSGLDGLIKIWNFKTANLANVLPKRDVRRMKFDVMENMWLDIAESIDISFDEIWQS</sequence>
<gene>
    <name type="ordered locus">MIMI_L84</name>
</gene>
<keyword id="KW-1185">Reference proteome</keyword>
<keyword id="KW-0677">Repeat</keyword>
<keyword id="KW-0853">WD repeat</keyword>
<dbReference type="EMBL" id="AY653733">
    <property type="protein sequence ID" value="AAV50359.1"/>
    <property type="molecule type" value="Genomic_DNA"/>
</dbReference>
<dbReference type="SMR" id="Q5UPG2"/>
<dbReference type="KEGG" id="vg:9924682"/>
<dbReference type="Proteomes" id="UP000001134">
    <property type="component" value="Genome"/>
</dbReference>
<dbReference type="Gene3D" id="2.130.10.10">
    <property type="entry name" value="YVTN repeat-like/Quinoprotein amine dehydrogenase"/>
    <property type="match status" value="1"/>
</dbReference>
<dbReference type="InterPro" id="IPR015943">
    <property type="entry name" value="WD40/YVTN_repeat-like_dom_sf"/>
</dbReference>
<dbReference type="InterPro" id="IPR019775">
    <property type="entry name" value="WD40_repeat_CS"/>
</dbReference>
<dbReference type="InterPro" id="IPR036322">
    <property type="entry name" value="WD40_repeat_dom_sf"/>
</dbReference>
<dbReference type="InterPro" id="IPR001680">
    <property type="entry name" value="WD40_rpt"/>
</dbReference>
<dbReference type="Pfam" id="PF00400">
    <property type="entry name" value="WD40"/>
    <property type="match status" value="1"/>
</dbReference>
<dbReference type="SMART" id="SM00320">
    <property type="entry name" value="WD40"/>
    <property type="match status" value="2"/>
</dbReference>
<dbReference type="SUPFAM" id="SSF50978">
    <property type="entry name" value="WD40 repeat-like"/>
    <property type="match status" value="1"/>
</dbReference>
<dbReference type="PROSITE" id="PS00678">
    <property type="entry name" value="WD_REPEATS_1"/>
    <property type="match status" value="1"/>
</dbReference>
<dbReference type="PROSITE" id="PS50082">
    <property type="entry name" value="WD_REPEATS_2"/>
    <property type="match status" value="1"/>
</dbReference>
<dbReference type="PROSITE" id="PS50294">
    <property type="entry name" value="WD_REPEATS_REGION"/>
    <property type="match status" value="1"/>
</dbReference>
<organism>
    <name type="scientific">Acanthamoeba polyphaga mimivirus</name>
    <name type="common">APMV</name>
    <dbReference type="NCBI Taxonomy" id="212035"/>
    <lineage>
        <taxon>Viruses</taxon>
        <taxon>Varidnaviria</taxon>
        <taxon>Bamfordvirae</taxon>
        <taxon>Nucleocytoviricota</taxon>
        <taxon>Megaviricetes</taxon>
        <taxon>Imitervirales</taxon>
        <taxon>Mimiviridae</taxon>
        <taxon>Megamimivirinae</taxon>
        <taxon>Mimivirus</taxon>
        <taxon>Mimivirus bradfordmassiliense</taxon>
    </lineage>
</organism>